<sequence>MANDRVPMTPAGEQALRAELDKLKKIERPAIIEAIAEARDHGDLKENAEYHAARERQGIIEGRIKDIESKLSNAQVIDVTKIQANGMVIFGATVTIMNVDTEEETTYKIVGEDEADIDNQKISVVAPLARALIKKEEGDEITLDTPKGKVTYEIVAVEYK</sequence>
<protein>
    <recommendedName>
        <fullName evidence="1">Transcription elongation factor GreA</fullName>
    </recommendedName>
    <alternativeName>
        <fullName evidence="1">Transcript cleavage factor GreA</fullName>
    </alternativeName>
</protein>
<gene>
    <name evidence="1" type="primary">greA</name>
    <name type="ordered locus">FTM_1326</name>
</gene>
<comment type="function">
    <text evidence="1">Necessary for efficient RNA polymerase transcription elongation past template-encoded arresting sites. The arresting sites in DNA have the property of trapping a certain fraction of elongating RNA polymerases that pass through, resulting in locked ternary complexes. Cleavage of the nascent transcript by cleavage factors such as GreA or GreB allows the resumption of elongation from the new 3'terminus. GreA releases sequences of 2 to 3 nucleotides.</text>
</comment>
<comment type="similarity">
    <text evidence="1">Belongs to the GreA/GreB family.</text>
</comment>
<keyword id="KW-0238">DNA-binding</keyword>
<keyword id="KW-0804">Transcription</keyword>
<keyword id="KW-0805">Transcription regulation</keyword>
<accession>B2SDF5</accession>
<feature type="chain" id="PRO_1000202855" description="Transcription elongation factor GreA">
    <location>
        <begin position="1"/>
        <end position="160"/>
    </location>
</feature>
<organism>
    <name type="scientific">Francisella tularensis subsp. mediasiatica (strain FSC147)</name>
    <dbReference type="NCBI Taxonomy" id="441952"/>
    <lineage>
        <taxon>Bacteria</taxon>
        <taxon>Pseudomonadati</taxon>
        <taxon>Pseudomonadota</taxon>
        <taxon>Gammaproteobacteria</taxon>
        <taxon>Thiotrichales</taxon>
        <taxon>Francisellaceae</taxon>
        <taxon>Francisella</taxon>
    </lineage>
</organism>
<name>GREA_FRATM</name>
<dbReference type="EMBL" id="CP000915">
    <property type="protein sequence ID" value="ACD31169.1"/>
    <property type="molecule type" value="Genomic_DNA"/>
</dbReference>
<dbReference type="SMR" id="B2SDF5"/>
<dbReference type="KEGG" id="ftm:FTM_1326"/>
<dbReference type="HOGENOM" id="CLU_101379_2_0_6"/>
<dbReference type="GO" id="GO:0003677">
    <property type="term" value="F:DNA binding"/>
    <property type="evidence" value="ECO:0007669"/>
    <property type="project" value="UniProtKB-UniRule"/>
</dbReference>
<dbReference type="GO" id="GO:0070063">
    <property type="term" value="F:RNA polymerase binding"/>
    <property type="evidence" value="ECO:0007669"/>
    <property type="project" value="InterPro"/>
</dbReference>
<dbReference type="GO" id="GO:0006354">
    <property type="term" value="P:DNA-templated transcription elongation"/>
    <property type="evidence" value="ECO:0007669"/>
    <property type="project" value="TreeGrafter"/>
</dbReference>
<dbReference type="GO" id="GO:0032784">
    <property type="term" value="P:regulation of DNA-templated transcription elongation"/>
    <property type="evidence" value="ECO:0007669"/>
    <property type="project" value="UniProtKB-UniRule"/>
</dbReference>
<dbReference type="FunFam" id="1.10.287.180:FF:000001">
    <property type="entry name" value="Transcription elongation factor GreA"/>
    <property type="match status" value="1"/>
</dbReference>
<dbReference type="FunFam" id="3.10.50.30:FF:000001">
    <property type="entry name" value="Transcription elongation factor GreA"/>
    <property type="match status" value="1"/>
</dbReference>
<dbReference type="Gene3D" id="3.10.50.30">
    <property type="entry name" value="Transcription elongation factor, GreA/GreB, C-terminal domain"/>
    <property type="match status" value="1"/>
</dbReference>
<dbReference type="Gene3D" id="1.10.287.180">
    <property type="entry name" value="Transcription elongation factor, GreA/GreB, N-terminal domain"/>
    <property type="match status" value="1"/>
</dbReference>
<dbReference type="HAMAP" id="MF_00105">
    <property type="entry name" value="GreA_GreB"/>
    <property type="match status" value="1"/>
</dbReference>
<dbReference type="InterPro" id="IPR036953">
    <property type="entry name" value="GreA/GreB_C_sf"/>
</dbReference>
<dbReference type="InterPro" id="IPR018151">
    <property type="entry name" value="TF_GreA/GreB_CS"/>
</dbReference>
<dbReference type="InterPro" id="IPR006359">
    <property type="entry name" value="Tscrpt_elong_fac_GreA"/>
</dbReference>
<dbReference type="InterPro" id="IPR028624">
    <property type="entry name" value="Tscrpt_elong_fac_GreA/B"/>
</dbReference>
<dbReference type="InterPro" id="IPR001437">
    <property type="entry name" value="Tscrpt_elong_fac_GreA/B_C"/>
</dbReference>
<dbReference type="InterPro" id="IPR023459">
    <property type="entry name" value="Tscrpt_elong_fac_GreA/B_fam"/>
</dbReference>
<dbReference type="InterPro" id="IPR022691">
    <property type="entry name" value="Tscrpt_elong_fac_GreA/B_N"/>
</dbReference>
<dbReference type="InterPro" id="IPR036805">
    <property type="entry name" value="Tscrpt_elong_fac_GreA/B_N_sf"/>
</dbReference>
<dbReference type="NCBIfam" id="TIGR01462">
    <property type="entry name" value="greA"/>
    <property type="match status" value="1"/>
</dbReference>
<dbReference type="NCBIfam" id="NF001261">
    <property type="entry name" value="PRK00226.1-2"/>
    <property type="match status" value="1"/>
</dbReference>
<dbReference type="NCBIfam" id="NF001263">
    <property type="entry name" value="PRK00226.1-4"/>
    <property type="match status" value="1"/>
</dbReference>
<dbReference type="NCBIfam" id="NF001264">
    <property type="entry name" value="PRK00226.1-5"/>
    <property type="match status" value="1"/>
</dbReference>
<dbReference type="PANTHER" id="PTHR30437">
    <property type="entry name" value="TRANSCRIPTION ELONGATION FACTOR GREA"/>
    <property type="match status" value="1"/>
</dbReference>
<dbReference type="PANTHER" id="PTHR30437:SF4">
    <property type="entry name" value="TRANSCRIPTION ELONGATION FACTOR GREA"/>
    <property type="match status" value="1"/>
</dbReference>
<dbReference type="Pfam" id="PF01272">
    <property type="entry name" value="GreA_GreB"/>
    <property type="match status" value="1"/>
</dbReference>
<dbReference type="Pfam" id="PF03449">
    <property type="entry name" value="GreA_GreB_N"/>
    <property type="match status" value="1"/>
</dbReference>
<dbReference type="PIRSF" id="PIRSF006092">
    <property type="entry name" value="GreA_GreB"/>
    <property type="match status" value="1"/>
</dbReference>
<dbReference type="SUPFAM" id="SSF54534">
    <property type="entry name" value="FKBP-like"/>
    <property type="match status" value="1"/>
</dbReference>
<dbReference type="SUPFAM" id="SSF46557">
    <property type="entry name" value="GreA transcript cleavage protein, N-terminal domain"/>
    <property type="match status" value="1"/>
</dbReference>
<dbReference type="PROSITE" id="PS00829">
    <property type="entry name" value="GREAB_1"/>
    <property type="match status" value="1"/>
</dbReference>
<evidence type="ECO:0000255" key="1">
    <source>
        <dbReference type="HAMAP-Rule" id="MF_00105"/>
    </source>
</evidence>
<proteinExistence type="inferred from homology"/>
<reference key="1">
    <citation type="journal article" date="2009" name="PLoS Pathog.">
        <title>Molecular evolutionary consequences of niche restriction in Francisella tularensis, a facultative intracellular pathogen.</title>
        <authorList>
            <person name="Larsson P."/>
            <person name="Elfsmark D."/>
            <person name="Svensson K."/>
            <person name="Wikstroem P."/>
            <person name="Forsman M."/>
            <person name="Brettin T."/>
            <person name="Keim P."/>
            <person name="Johansson A."/>
        </authorList>
    </citation>
    <scope>NUCLEOTIDE SEQUENCE [LARGE SCALE GENOMIC DNA]</scope>
    <source>
        <strain>FSC147</strain>
    </source>
</reference>